<organism>
    <name type="scientific">Herpetosiphon aurantiacus (strain ATCC 23779 / DSM 785 / 114-95)</name>
    <dbReference type="NCBI Taxonomy" id="316274"/>
    <lineage>
        <taxon>Bacteria</taxon>
        <taxon>Bacillati</taxon>
        <taxon>Chloroflexota</taxon>
        <taxon>Chloroflexia</taxon>
        <taxon>Herpetosiphonales</taxon>
        <taxon>Herpetosiphonaceae</taxon>
        <taxon>Herpetosiphon</taxon>
    </lineage>
</organism>
<protein>
    <recommendedName>
        <fullName evidence="1">Adenosylcobinamide-GDP ribazoletransferase</fullName>
        <ecNumber evidence="1">2.7.8.26</ecNumber>
    </recommendedName>
    <alternativeName>
        <fullName evidence="1">Cobalamin synthase</fullName>
    </alternativeName>
    <alternativeName>
        <fullName evidence="1">Cobalamin-5'-phosphate synthase</fullName>
    </alternativeName>
</protein>
<gene>
    <name evidence="1" type="primary">cobS</name>
    <name type="ordered locus">Haur_4390</name>
</gene>
<reference key="1">
    <citation type="journal article" date="2011" name="Stand. Genomic Sci.">
        <title>Complete genome sequence of the filamentous gliding predatory bacterium Herpetosiphon aurantiacus type strain (114-95(T)).</title>
        <authorList>
            <person name="Kiss H."/>
            <person name="Nett M."/>
            <person name="Domin N."/>
            <person name="Martin K."/>
            <person name="Maresca J.A."/>
            <person name="Copeland A."/>
            <person name="Lapidus A."/>
            <person name="Lucas S."/>
            <person name="Berry K.W."/>
            <person name="Glavina Del Rio T."/>
            <person name="Dalin E."/>
            <person name="Tice H."/>
            <person name="Pitluck S."/>
            <person name="Richardson P."/>
            <person name="Bruce D."/>
            <person name="Goodwin L."/>
            <person name="Han C."/>
            <person name="Detter J.C."/>
            <person name="Schmutz J."/>
            <person name="Brettin T."/>
            <person name="Land M."/>
            <person name="Hauser L."/>
            <person name="Kyrpides N.C."/>
            <person name="Ivanova N."/>
            <person name="Goeker M."/>
            <person name="Woyke T."/>
            <person name="Klenk H.P."/>
            <person name="Bryant D.A."/>
        </authorList>
    </citation>
    <scope>NUCLEOTIDE SEQUENCE [LARGE SCALE GENOMIC DNA]</scope>
    <source>
        <strain>ATCC 23779 / DSM 785 / 114-95</strain>
    </source>
</reference>
<dbReference type="EC" id="2.7.8.26" evidence="1"/>
<dbReference type="EMBL" id="CP000875">
    <property type="protein sequence ID" value="ABX07022.1"/>
    <property type="molecule type" value="Genomic_DNA"/>
</dbReference>
<dbReference type="STRING" id="316274.Haur_4390"/>
<dbReference type="KEGG" id="hau:Haur_4390"/>
<dbReference type="eggNOG" id="COG0368">
    <property type="taxonomic scope" value="Bacteria"/>
</dbReference>
<dbReference type="HOGENOM" id="CLU_057426_3_1_0"/>
<dbReference type="InParanoid" id="A9AYY2"/>
<dbReference type="UniPathway" id="UPA00148">
    <property type="reaction ID" value="UER00238"/>
</dbReference>
<dbReference type="Proteomes" id="UP000000787">
    <property type="component" value="Chromosome"/>
</dbReference>
<dbReference type="GO" id="GO:0005886">
    <property type="term" value="C:plasma membrane"/>
    <property type="evidence" value="ECO:0007669"/>
    <property type="project" value="UniProtKB-SubCell"/>
</dbReference>
<dbReference type="GO" id="GO:0051073">
    <property type="term" value="F:adenosylcobinamide-GDP ribazoletransferase activity"/>
    <property type="evidence" value="ECO:0007669"/>
    <property type="project" value="UniProtKB-UniRule"/>
</dbReference>
<dbReference type="GO" id="GO:0008818">
    <property type="term" value="F:cobalamin 5'-phosphate synthase activity"/>
    <property type="evidence" value="ECO:0007669"/>
    <property type="project" value="UniProtKB-UniRule"/>
</dbReference>
<dbReference type="GO" id="GO:0009236">
    <property type="term" value="P:cobalamin biosynthetic process"/>
    <property type="evidence" value="ECO:0007669"/>
    <property type="project" value="UniProtKB-UniRule"/>
</dbReference>
<dbReference type="HAMAP" id="MF_00719">
    <property type="entry name" value="CobS"/>
    <property type="match status" value="1"/>
</dbReference>
<dbReference type="InterPro" id="IPR003805">
    <property type="entry name" value="CobS"/>
</dbReference>
<dbReference type="NCBIfam" id="TIGR00317">
    <property type="entry name" value="cobS"/>
    <property type="match status" value="1"/>
</dbReference>
<dbReference type="PANTHER" id="PTHR34148">
    <property type="entry name" value="ADENOSYLCOBINAMIDE-GDP RIBAZOLETRANSFERASE"/>
    <property type="match status" value="1"/>
</dbReference>
<dbReference type="PANTHER" id="PTHR34148:SF1">
    <property type="entry name" value="ADENOSYLCOBINAMIDE-GDP RIBAZOLETRANSFERASE"/>
    <property type="match status" value="1"/>
</dbReference>
<dbReference type="Pfam" id="PF02654">
    <property type="entry name" value="CobS"/>
    <property type="match status" value="1"/>
</dbReference>
<evidence type="ECO:0000255" key="1">
    <source>
        <dbReference type="HAMAP-Rule" id="MF_00719"/>
    </source>
</evidence>
<proteinExistence type="inferred from homology"/>
<accession>A9AYY2</accession>
<sequence>MIKHLAEALRFLTILPIPGKPALSEQALVRSMVAFPLAGTLIGGLVAATWFGATWLWGTTTGSLCAILTWGAITSGLHLDGIADSADALFSWRSRERKLEIMKDSRIGTMGAIALISILLLKWLFVLGCGDLAWRALIVAPTLGRWVDIIGIFWFPPAAEGGLGRTFHDHTRRSDFWWATSCAGLVAAGLLWWWAGLIFAVVIVATIIIARWMVRSLGGLTGDTYGALCEIAEMLVLAVVAALVNHQVL</sequence>
<keyword id="KW-1003">Cell membrane</keyword>
<keyword id="KW-0169">Cobalamin biosynthesis</keyword>
<keyword id="KW-0460">Magnesium</keyword>
<keyword id="KW-0472">Membrane</keyword>
<keyword id="KW-0808">Transferase</keyword>
<keyword id="KW-0812">Transmembrane</keyword>
<keyword id="KW-1133">Transmembrane helix</keyword>
<feature type="chain" id="PRO_1000132583" description="Adenosylcobinamide-GDP ribazoletransferase">
    <location>
        <begin position="1"/>
        <end position="249"/>
    </location>
</feature>
<feature type="transmembrane region" description="Helical" evidence="1">
    <location>
        <begin position="32"/>
        <end position="52"/>
    </location>
</feature>
<feature type="transmembrane region" description="Helical" evidence="1">
    <location>
        <begin position="53"/>
        <end position="73"/>
    </location>
</feature>
<feature type="transmembrane region" description="Helical" evidence="1">
    <location>
        <begin position="107"/>
        <end position="127"/>
    </location>
</feature>
<feature type="transmembrane region" description="Helical" evidence="1">
    <location>
        <begin position="136"/>
        <end position="156"/>
    </location>
</feature>
<feature type="transmembrane region" description="Helical" evidence="1">
    <location>
        <begin position="190"/>
        <end position="210"/>
    </location>
</feature>
<feature type="transmembrane region" description="Helical" evidence="1">
    <location>
        <begin position="224"/>
        <end position="244"/>
    </location>
</feature>
<comment type="function">
    <text evidence="1">Joins adenosylcobinamide-GDP and alpha-ribazole to generate adenosylcobalamin (Ado-cobalamin). Also synthesizes adenosylcobalamin 5'-phosphate from adenosylcobinamide-GDP and alpha-ribazole 5'-phosphate.</text>
</comment>
<comment type="catalytic activity">
    <reaction evidence="1">
        <text>alpha-ribazole + adenosylcob(III)inamide-GDP = adenosylcob(III)alamin + GMP + H(+)</text>
        <dbReference type="Rhea" id="RHEA:16049"/>
        <dbReference type="ChEBI" id="CHEBI:10329"/>
        <dbReference type="ChEBI" id="CHEBI:15378"/>
        <dbReference type="ChEBI" id="CHEBI:18408"/>
        <dbReference type="ChEBI" id="CHEBI:58115"/>
        <dbReference type="ChEBI" id="CHEBI:60487"/>
        <dbReference type="EC" id="2.7.8.26"/>
    </reaction>
</comment>
<comment type="catalytic activity">
    <reaction evidence="1">
        <text>alpha-ribazole 5'-phosphate + adenosylcob(III)inamide-GDP = adenosylcob(III)alamin 5'-phosphate + GMP + H(+)</text>
        <dbReference type="Rhea" id="RHEA:23560"/>
        <dbReference type="ChEBI" id="CHEBI:15378"/>
        <dbReference type="ChEBI" id="CHEBI:57918"/>
        <dbReference type="ChEBI" id="CHEBI:58115"/>
        <dbReference type="ChEBI" id="CHEBI:60487"/>
        <dbReference type="ChEBI" id="CHEBI:60493"/>
        <dbReference type="EC" id="2.7.8.26"/>
    </reaction>
</comment>
<comment type="cofactor">
    <cofactor evidence="1">
        <name>Mg(2+)</name>
        <dbReference type="ChEBI" id="CHEBI:18420"/>
    </cofactor>
</comment>
<comment type="pathway">
    <text evidence="1">Cofactor biosynthesis; adenosylcobalamin biosynthesis; adenosylcobalamin from cob(II)yrinate a,c-diamide: step 7/7.</text>
</comment>
<comment type="subcellular location">
    <subcellularLocation>
        <location evidence="1">Cell membrane</location>
        <topology evidence="1">Multi-pass membrane protein</topology>
    </subcellularLocation>
</comment>
<comment type="similarity">
    <text evidence="1">Belongs to the CobS family.</text>
</comment>
<name>COBS_HERA2</name>